<name>LIPA_SHEB2</name>
<organism>
    <name type="scientific">Shewanella baltica (strain OS223)</name>
    <dbReference type="NCBI Taxonomy" id="407976"/>
    <lineage>
        <taxon>Bacteria</taxon>
        <taxon>Pseudomonadati</taxon>
        <taxon>Pseudomonadota</taxon>
        <taxon>Gammaproteobacteria</taxon>
        <taxon>Alteromonadales</taxon>
        <taxon>Shewanellaceae</taxon>
        <taxon>Shewanella</taxon>
    </lineage>
</organism>
<proteinExistence type="inferred from homology"/>
<protein>
    <recommendedName>
        <fullName evidence="1">Lipoyl synthase</fullName>
        <ecNumber evidence="1">2.8.1.8</ecNumber>
    </recommendedName>
    <alternativeName>
        <fullName evidence="1">Lip-syn</fullName>
        <shortName evidence="1">LS</shortName>
    </alternativeName>
    <alternativeName>
        <fullName evidence="1">Lipoate synthase</fullName>
    </alternativeName>
    <alternativeName>
        <fullName evidence="1">Lipoic acid synthase</fullName>
    </alternativeName>
    <alternativeName>
        <fullName evidence="1">Sulfur insertion protein LipA</fullName>
    </alternativeName>
</protein>
<reference key="1">
    <citation type="submission" date="2008-12" db="EMBL/GenBank/DDBJ databases">
        <title>Complete sequence of chromosome of Shewanella baltica OS223.</title>
        <authorList>
            <consortium name="US DOE Joint Genome Institute"/>
            <person name="Lucas S."/>
            <person name="Copeland A."/>
            <person name="Lapidus A."/>
            <person name="Glavina del Rio T."/>
            <person name="Dalin E."/>
            <person name="Tice H."/>
            <person name="Bruce D."/>
            <person name="Goodwin L."/>
            <person name="Pitluck S."/>
            <person name="Chertkov O."/>
            <person name="Meincke L."/>
            <person name="Brettin T."/>
            <person name="Detter J.C."/>
            <person name="Han C."/>
            <person name="Kuske C.R."/>
            <person name="Larimer F."/>
            <person name="Land M."/>
            <person name="Hauser L."/>
            <person name="Kyrpides N."/>
            <person name="Ovchinnikova G."/>
            <person name="Brettar I."/>
            <person name="Rodrigues J."/>
            <person name="Konstantinidis K."/>
            <person name="Tiedje J."/>
        </authorList>
    </citation>
    <scope>NUCLEOTIDE SEQUENCE [LARGE SCALE GENOMIC DNA]</scope>
    <source>
        <strain>OS223</strain>
    </source>
</reference>
<evidence type="ECO:0000255" key="1">
    <source>
        <dbReference type="HAMAP-Rule" id="MF_00206"/>
    </source>
</evidence>
<evidence type="ECO:0000255" key="2">
    <source>
        <dbReference type="PROSITE-ProRule" id="PRU01266"/>
    </source>
</evidence>
<sequence>MNRPERLQPGVKLRDADKVSRIPVKIVPSERDTMLRKPDWLRVKLPASNQRILEIKQALRKNGLHSVCEEASCPNLAECFNHGTATFMILGAICTRRCPFCDVAHGRPLKPDAEEPVKLAQTIRDMKLKYVVITSVDRDDLRDGGAQHFADCIREIRKLNPDIKIETLVPDFRGRIDAALDILSTEPPDVFNHNLETAPMHYRKARPGANYQWSLDLLKRFKERHPNVPTKSGLMMGLGETNEEIAQVLRDLRAHNVEMLTLGQYLQPSKFHLPVERYVPPAEFDELKALADELGFTHAACGPLVRSSYHADLQAQGKEVK</sequence>
<keyword id="KW-0004">4Fe-4S</keyword>
<keyword id="KW-0963">Cytoplasm</keyword>
<keyword id="KW-0408">Iron</keyword>
<keyword id="KW-0411">Iron-sulfur</keyword>
<keyword id="KW-0479">Metal-binding</keyword>
<keyword id="KW-0949">S-adenosyl-L-methionine</keyword>
<keyword id="KW-0808">Transferase</keyword>
<comment type="function">
    <text evidence="1">Catalyzes the radical-mediated insertion of two sulfur atoms into the C-6 and C-8 positions of the octanoyl moiety bound to the lipoyl domains of lipoate-dependent enzymes, thereby converting the octanoylated domains into lipoylated derivatives.</text>
</comment>
<comment type="catalytic activity">
    <reaction evidence="1">
        <text>[[Fe-S] cluster scaffold protein carrying a second [4Fe-4S](2+) cluster] + N(6)-octanoyl-L-lysyl-[protein] + 2 oxidized [2Fe-2S]-[ferredoxin] + 2 S-adenosyl-L-methionine + 4 H(+) = [[Fe-S] cluster scaffold protein] + N(6)-[(R)-dihydrolipoyl]-L-lysyl-[protein] + 4 Fe(3+) + 2 hydrogen sulfide + 2 5'-deoxyadenosine + 2 L-methionine + 2 reduced [2Fe-2S]-[ferredoxin]</text>
        <dbReference type="Rhea" id="RHEA:16585"/>
        <dbReference type="Rhea" id="RHEA-COMP:9928"/>
        <dbReference type="Rhea" id="RHEA-COMP:10000"/>
        <dbReference type="Rhea" id="RHEA-COMP:10001"/>
        <dbReference type="Rhea" id="RHEA-COMP:10475"/>
        <dbReference type="Rhea" id="RHEA-COMP:14568"/>
        <dbReference type="Rhea" id="RHEA-COMP:14569"/>
        <dbReference type="ChEBI" id="CHEBI:15378"/>
        <dbReference type="ChEBI" id="CHEBI:17319"/>
        <dbReference type="ChEBI" id="CHEBI:29034"/>
        <dbReference type="ChEBI" id="CHEBI:29919"/>
        <dbReference type="ChEBI" id="CHEBI:33722"/>
        <dbReference type="ChEBI" id="CHEBI:33737"/>
        <dbReference type="ChEBI" id="CHEBI:33738"/>
        <dbReference type="ChEBI" id="CHEBI:57844"/>
        <dbReference type="ChEBI" id="CHEBI:59789"/>
        <dbReference type="ChEBI" id="CHEBI:78809"/>
        <dbReference type="ChEBI" id="CHEBI:83100"/>
        <dbReference type="EC" id="2.8.1.8"/>
    </reaction>
</comment>
<comment type="cofactor">
    <cofactor evidence="1">
        <name>[4Fe-4S] cluster</name>
        <dbReference type="ChEBI" id="CHEBI:49883"/>
    </cofactor>
    <text evidence="1">Binds 2 [4Fe-4S] clusters per subunit. One cluster is coordinated with 3 cysteines and an exchangeable S-adenosyl-L-methionine.</text>
</comment>
<comment type="pathway">
    <text evidence="1">Protein modification; protein lipoylation via endogenous pathway; protein N(6)-(lipoyl)lysine from octanoyl-[acyl-carrier-protein]: step 2/2.</text>
</comment>
<comment type="subcellular location">
    <subcellularLocation>
        <location evidence="1">Cytoplasm</location>
    </subcellularLocation>
</comment>
<comment type="similarity">
    <text evidence="1">Belongs to the radical SAM superfamily. Lipoyl synthase family.</text>
</comment>
<accession>B8E4W4</accession>
<dbReference type="EC" id="2.8.1.8" evidence="1"/>
<dbReference type="EMBL" id="CP001252">
    <property type="protein sequence ID" value="ACK45600.1"/>
    <property type="molecule type" value="Genomic_DNA"/>
</dbReference>
<dbReference type="RefSeq" id="WP_006082760.1">
    <property type="nucleotide sequence ID" value="NC_011663.1"/>
</dbReference>
<dbReference type="SMR" id="B8E4W4"/>
<dbReference type="GeneID" id="11773506"/>
<dbReference type="KEGG" id="sbp:Sbal223_1085"/>
<dbReference type="HOGENOM" id="CLU_033144_2_1_6"/>
<dbReference type="UniPathway" id="UPA00538">
    <property type="reaction ID" value="UER00593"/>
</dbReference>
<dbReference type="Proteomes" id="UP000002507">
    <property type="component" value="Chromosome"/>
</dbReference>
<dbReference type="GO" id="GO:0005737">
    <property type="term" value="C:cytoplasm"/>
    <property type="evidence" value="ECO:0007669"/>
    <property type="project" value="UniProtKB-SubCell"/>
</dbReference>
<dbReference type="GO" id="GO:0051539">
    <property type="term" value="F:4 iron, 4 sulfur cluster binding"/>
    <property type="evidence" value="ECO:0007669"/>
    <property type="project" value="UniProtKB-UniRule"/>
</dbReference>
<dbReference type="GO" id="GO:0016992">
    <property type="term" value="F:lipoate synthase activity"/>
    <property type="evidence" value="ECO:0007669"/>
    <property type="project" value="UniProtKB-UniRule"/>
</dbReference>
<dbReference type="GO" id="GO:0046872">
    <property type="term" value="F:metal ion binding"/>
    <property type="evidence" value="ECO:0007669"/>
    <property type="project" value="UniProtKB-KW"/>
</dbReference>
<dbReference type="CDD" id="cd01335">
    <property type="entry name" value="Radical_SAM"/>
    <property type="match status" value="1"/>
</dbReference>
<dbReference type="FunFam" id="3.20.20.70:FF:000023">
    <property type="entry name" value="Lipoyl synthase"/>
    <property type="match status" value="1"/>
</dbReference>
<dbReference type="Gene3D" id="3.20.20.70">
    <property type="entry name" value="Aldolase class I"/>
    <property type="match status" value="1"/>
</dbReference>
<dbReference type="HAMAP" id="MF_00206">
    <property type="entry name" value="Lipoyl_synth"/>
    <property type="match status" value="1"/>
</dbReference>
<dbReference type="InterPro" id="IPR013785">
    <property type="entry name" value="Aldolase_TIM"/>
</dbReference>
<dbReference type="InterPro" id="IPR006638">
    <property type="entry name" value="Elp3/MiaA/NifB-like_rSAM"/>
</dbReference>
<dbReference type="InterPro" id="IPR003698">
    <property type="entry name" value="Lipoyl_synth"/>
</dbReference>
<dbReference type="InterPro" id="IPR007197">
    <property type="entry name" value="rSAM"/>
</dbReference>
<dbReference type="NCBIfam" id="TIGR00510">
    <property type="entry name" value="lipA"/>
    <property type="match status" value="1"/>
</dbReference>
<dbReference type="NCBIfam" id="NF004019">
    <property type="entry name" value="PRK05481.1"/>
    <property type="match status" value="1"/>
</dbReference>
<dbReference type="NCBIfam" id="NF009544">
    <property type="entry name" value="PRK12928.1"/>
    <property type="match status" value="1"/>
</dbReference>
<dbReference type="PANTHER" id="PTHR10949">
    <property type="entry name" value="LIPOYL SYNTHASE"/>
    <property type="match status" value="1"/>
</dbReference>
<dbReference type="PANTHER" id="PTHR10949:SF0">
    <property type="entry name" value="LIPOYL SYNTHASE, MITOCHONDRIAL"/>
    <property type="match status" value="1"/>
</dbReference>
<dbReference type="Pfam" id="PF04055">
    <property type="entry name" value="Radical_SAM"/>
    <property type="match status" value="1"/>
</dbReference>
<dbReference type="PIRSF" id="PIRSF005963">
    <property type="entry name" value="Lipoyl_synth"/>
    <property type="match status" value="1"/>
</dbReference>
<dbReference type="SFLD" id="SFLDF00271">
    <property type="entry name" value="lipoyl_synthase"/>
    <property type="match status" value="1"/>
</dbReference>
<dbReference type="SFLD" id="SFLDS00029">
    <property type="entry name" value="Radical_SAM"/>
    <property type="match status" value="1"/>
</dbReference>
<dbReference type="SMART" id="SM00729">
    <property type="entry name" value="Elp3"/>
    <property type="match status" value="1"/>
</dbReference>
<dbReference type="SUPFAM" id="SSF102114">
    <property type="entry name" value="Radical SAM enzymes"/>
    <property type="match status" value="1"/>
</dbReference>
<dbReference type="PROSITE" id="PS51918">
    <property type="entry name" value="RADICAL_SAM"/>
    <property type="match status" value="1"/>
</dbReference>
<gene>
    <name evidence="1" type="primary">lipA</name>
    <name type="ordered locus">Sbal223_1085</name>
</gene>
<feature type="chain" id="PRO_1000124645" description="Lipoyl synthase">
    <location>
        <begin position="1"/>
        <end position="321"/>
    </location>
</feature>
<feature type="domain" description="Radical SAM core" evidence="2">
    <location>
        <begin position="80"/>
        <end position="297"/>
    </location>
</feature>
<feature type="binding site" evidence="1">
    <location>
        <position position="68"/>
    </location>
    <ligand>
        <name>[4Fe-4S] cluster</name>
        <dbReference type="ChEBI" id="CHEBI:49883"/>
        <label>1</label>
    </ligand>
</feature>
<feature type="binding site" evidence="1">
    <location>
        <position position="73"/>
    </location>
    <ligand>
        <name>[4Fe-4S] cluster</name>
        <dbReference type="ChEBI" id="CHEBI:49883"/>
        <label>1</label>
    </ligand>
</feature>
<feature type="binding site" evidence="1">
    <location>
        <position position="79"/>
    </location>
    <ligand>
        <name>[4Fe-4S] cluster</name>
        <dbReference type="ChEBI" id="CHEBI:49883"/>
        <label>1</label>
    </ligand>
</feature>
<feature type="binding site" evidence="1">
    <location>
        <position position="94"/>
    </location>
    <ligand>
        <name>[4Fe-4S] cluster</name>
        <dbReference type="ChEBI" id="CHEBI:49883"/>
        <label>2</label>
        <note>4Fe-4S-S-AdoMet</note>
    </ligand>
</feature>
<feature type="binding site" evidence="1">
    <location>
        <position position="98"/>
    </location>
    <ligand>
        <name>[4Fe-4S] cluster</name>
        <dbReference type="ChEBI" id="CHEBI:49883"/>
        <label>2</label>
        <note>4Fe-4S-S-AdoMet</note>
    </ligand>
</feature>
<feature type="binding site" evidence="1">
    <location>
        <position position="101"/>
    </location>
    <ligand>
        <name>[4Fe-4S] cluster</name>
        <dbReference type="ChEBI" id="CHEBI:49883"/>
        <label>2</label>
        <note>4Fe-4S-S-AdoMet</note>
    </ligand>
</feature>
<feature type="binding site" evidence="1">
    <location>
        <position position="308"/>
    </location>
    <ligand>
        <name>[4Fe-4S] cluster</name>
        <dbReference type="ChEBI" id="CHEBI:49883"/>
        <label>1</label>
    </ligand>
</feature>